<gene>
    <name type="primary">PLR_Tp2</name>
</gene>
<evidence type="ECO:0000250" key="1"/>
<evidence type="ECO:0000250" key="2">
    <source>
        <dbReference type="UniProtKB" id="Q9LD14"/>
    </source>
</evidence>
<evidence type="ECO:0000269" key="3">
    <source>
    </source>
</evidence>
<evidence type="ECO:0000305" key="4"/>
<evidence type="ECO:0000305" key="5">
    <source>
    </source>
</evidence>
<proteinExistence type="evidence at protein level"/>
<comment type="function">
    <text evidence="3">Reductase involved in lignan biosynthesis. Catalyzes the enantioselective sequential conversion of (+)-pinoresinol into (+)-lariciresinol and of (+)-lariciresinol into (-)-secoisolariciresinol. Can also convert with a lower efficiency (-)-pinoresinol into (-)-lariciresinol, but not (-)-lariciresinol into (+)-secoisolariciresinol. Abstracts the 4R-hydride from the NADPH cofactor during catalysis.</text>
</comment>
<comment type="catalytic activity">
    <reaction evidence="3">
        <text>(+)-lariciresinol + NADP(+) = (+)-pinoresinol + NADPH + H(+)</text>
        <dbReference type="Rhea" id="RHEA:34419"/>
        <dbReference type="ChEBI" id="CHEBI:40"/>
        <dbReference type="ChEBI" id="CHEBI:15378"/>
        <dbReference type="ChEBI" id="CHEBI:57783"/>
        <dbReference type="ChEBI" id="CHEBI:58349"/>
        <dbReference type="ChEBI" id="CHEBI:67246"/>
        <dbReference type="EC" id="1.23.1.1"/>
    </reaction>
</comment>
<comment type="catalytic activity">
    <reaction evidence="3">
        <text>(-)-secoisolariciresinol + NADP(+) = (+)-lariciresinol + NADPH + H(+)</text>
        <dbReference type="Rhea" id="RHEA:34423"/>
        <dbReference type="ChEBI" id="CHEBI:15378"/>
        <dbReference type="ChEBI" id="CHEBI:57783"/>
        <dbReference type="ChEBI" id="CHEBI:58349"/>
        <dbReference type="ChEBI" id="CHEBI:65004"/>
        <dbReference type="ChEBI" id="CHEBI:67246"/>
        <dbReference type="EC" id="1.23.1.2"/>
    </reaction>
</comment>
<comment type="catalytic activity">
    <reaction evidence="3">
        <text>(-)-lariciresinol + NADP(+) = (-)-pinoresinol + NADPH + H(+)</text>
        <dbReference type="Rhea" id="RHEA:34427"/>
        <dbReference type="ChEBI" id="CHEBI:15378"/>
        <dbReference type="ChEBI" id="CHEBI:57783"/>
        <dbReference type="ChEBI" id="CHEBI:58349"/>
        <dbReference type="ChEBI" id="CHEBI:67244"/>
        <dbReference type="ChEBI" id="CHEBI:67245"/>
        <dbReference type="EC" id="1.23.1.3"/>
    </reaction>
</comment>
<comment type="subunit">
    <text evidence="1">Dimer.</text>
</comment>
<comment type="miscellaneous">
    <text evidence="5">Leu-164, Gly-267 and Phe-271 are involved in enantiospecific binding of (+)-pinoresinol while in PLR_Tp1, a 'Val-267' and a symmetric substitution between Phe and Leu favor binding of the (-)-antipode of pinoresinol.</text>
</comment>
<comment type="similarity">
    <text evidence="4">Belongs to the NmrA-type oxidoreductase family. Isoflavone reductase subfamily.</text>
</comment>
<dbReference type="EC" id="1.23.1.2"/>
<dbReference type="EC" id="1.23.1.1"/>
<dbReference type="EC" id="1.23.1.3"/>
<dbReference type="EMBL" id="AF242504">
    <property type="protein sequence ID" value="AAF63508.1"/>
    <property type="molecule type" value="mRNA"/>
</dbReference>
<dbReference type="SMR" id="Q9LD13"/>
<dbReference type="KEGG" id="ag:AAF63508"/>
<dbReference type="GO" id="GO:0010284">
    <property type="term" value="F:lariciresinol reductase activity"/>
    <property type="evidence" value="ECO:0000314"/>
    <property type="project" value="UniProtKB"/>
</dbReference>
<dbReference type="GO" id="GO:0010283">
    <property type="term" value="F:pinoresinol reductase activity"/>
    <property type="evidence" value="ECO:0000314"/>
    <property type="project" value="UniProtKB"/>
</dbReference>
<dbReference type="GO" id="GO:1902132">
    <property type="term" value="P:(+)-lariciresinol biosynthetic process"/>
    <property type="evidence" value="ECO:0000314"/>
    <property type="project" value="UniProtKB"/>
</dbReference>
<dbReference type="GO" id="GO:1902131">
    <property type="term" value="P:(+)-lariciresinol catabolic process"/>
    <property type="evidence" value="ECO:0000314"/>
    <property type="project" value="UniProtKB"/>
</dbReference>
<dbReference type="GO" id="GO:1902125">
    <property type="term" value="P:(+)-pinoresinol catabolic process"/>
    <property type="evidence" value="ECO:0000314"/>
    <property type="project" value="UniProtKB"/>
</dbReference>
<dbReference type="GO" id="GO:1902129">
    <property type="term" value="P:(-)-lariciresinol biosynthetic process"/>
    <property type="evidence" value="ECO:0000314"/>
    <property type="project" value="UniProtKB"/>
</dbReference>
<dbReference type="GO" id="GO:1902123">
    <property type="term" value="P:(-)-pinoresinol catabolic process"/>
    <property type="evidence" value="ECO:0000314"/>
    <property type="project" value="UniProtKB"/>
</dbReference>
<dbReference type="GO" id="GO:1902138">
    <property type="term" value="P:(-)-secoisolariciresinol biosynthetic process"/>
    <property type="evidence" value="ECO:0000314"/>
    <property type="project" value="UniProtKB"/>
</dbReference>
<dbReference type="GO" id="GO:0009807">
    <property type="term" value="P:lignan biosynthetic process"/>
    <property type="evidence" value="ECO:0000314"/>
    <property type="project" value="UniProtKB"/>
</dbReference>
<dbReference type="CDD" id="cd05259">
    <property type="entry name" value="PCBER_SDR_a"/>
    <property type="match status" value="1"/>
</dbReference>
<dbReference type="Gene3D" id="3.40.50.720">
    <property type="entry name" value="NAD(P)-binding Rossmann-like Domain"/>
    <property type="match status" value="1"/>
</dbReference>
<dbReference type="Gene3D" id="3.90.25.10">
    <property type="entry name" value="UDP-galactose 4-epimerase, domain 1"/>
    <property type="match status" value="1"/>
</dbReference>
<dbReference type="InterPro" id="IPR036291">
    <property type="entry name" value="NAD(P)-bd_dom_sf"/>
</dbReference>
<dbReference type="InterPro" id="IPR008030">
    <property type="entry name" value="NmrA-like"/>
</dbReference>
<dbReference type="InterPro" id="IPR050608">
    <property type="entry name" value="NmrA-type/Isoflavone_red_sf"/>
</dbReference>
<dbReference type="InterPro" id="IPR045312">
    <property type="entry name" value="PCBER-like"/>
</dbReference>
<dbReference type="PANTHER" id="PTHR43349:SF4">
    <property type="entry name" value="PINORESINOL REDUCTASE 1-RELATED"/>
    <property type="match status" value="1"/>
</dbReference>
<dbReference type="PANTHER" id="PTHR43349">
    <property type="entry name" value="PINORESINOL REDUCTASE-RELATED"/>
    <property type="match status" value="1"/>
</dbReference>
<dbReference type="Pfam" id="PF05368">
    <property type="entry name" value="NmrA"/>
    <property type="match status" value="1"/>
</dbReference>
<dbReference type="SUPFAM" id="SSF51735">
    <property type="entry name" value="NAD(P)-binding Rossmann-fold domains"/>
    <property type="match status" value="1"/>
</dbReference>
<organism>
    <name type="scientific">Thuja plicata</name>
    <name type="common">Western red-cedar</name>
    <name type="synonym">Giant arborvitae</name>
    <dbReference type="NCBI Taxonomy" id="3316"/>
    <lineage>
        <taxon>Eukaryota</taxon>
        <taxon>Viridiplantae</taxon>
        <taxon>Streptophyta</taxon>
        <taxon>Embryophyta</taxon>
        <taxon>Tracheophyta</taxon>
        <taxon>Spermatophyta</taxon>
        <taxon>Pinopsida</taxon>
        <taxon>Pinidae</taxon>
        <taxon>Conifers II</taxon>
        <taxon>Cupressales</taxon>
        <taxon>Cupressaceae</taxon>
        <taxon>Thuja</taxon>
    </lineage>
</organism>
<sequence>MEESSRVLIVGGTGYIGRRIVKASIALGHPTFILFRKEVVSDVEKVEMLLSFKKNGAKLLEASFDDHESLVDAVKQVDVVISAVAGNHMRHHILQQLKLVEAIKEAGNIKRFVPSEFGMDPGLMEHAMAPGNIVFIDKIKVREAIEAASIPHTYISANIFAGYLVGGLAQLGRVMPPSEKVILYGDGNVKAVWVDEDDVGIYTIKAIDDPHTLNKTMYIRPPLNILSQKEVVEKWEKLSGKSLNKINISVEDFLAGMEGQSYGEQIGISHFYQMFYRGDLYNFEIGPNGVEASQLYPEVKYTTVDSYMERYL</sequence>
<name>PILR2_THUPL</name>
<reference key="1">
    <citation type="journal article" date="1999" name="J. Biol. Chem.">
        <title>Recombinant pinoresinol-lariciresinol reductases from western red cedar (Thuja plicata) catalyze opposite enantiospecific conversions.</title>
        <authorList>
            <person name="Fujita M."/>
            <person name="Gang D.R."/>
            <person name="Davin L.B."/>
            <person name="Lewis N.G."/>
        </authorList>
    </citation>
    <scope>NUCLEOTIDE SEQUENCE [MRNA]</scope>
    <scope>FUNCTION</scope>
    <scope>CATALYTIC ACTIVITY</scope>
    <source>
        <tissue>Stem</tissue>
    </source>
</reference>
<reference key="2">
    <citation type="journal article" date="2003" name="J. Biol. Chem.">
        <title>Crystal structures of pinoresinol-lariciresinol and phenylcoumaran benzylic ether reductases and their relationship to isoflavone reductases.</title>
        <authorList>
            <person name="Min T."/>
            <person name="Kasahara H."/>
            <person name="Bedgar D.L."/>
            <person name="Youn B."/>
            <person name="Lawrence P.K."/>
            <person name="Gang D.R."/>
            <person name="Halls S.C."/>
            <person name="Park H."/>
            <person name="Hilsenbeck J.L."/>
            <person name="Davin L.B."/>
            <person name="Lewis N.G."/>
            <person name="Kang C."/>
            <person name="Lewis N.G."/>
        </authorList>
    </citation>
    <scope>3D-STRUCTURE MODELING</scope>
</reference>
<feature type="initiator methionine" description="Removed" evidence="1">
    <location>
        <position position="1"/>
    </location>
</feature>
<feature type="chain" id="PRO_0000422933" description="Bifunctional pinoresinol-lariciresinol reductase 2">
    <location>
        <begin position="2"/>
        <end position="312"/>
    </location>
</feature>
<feature type="active site" description="Proton acceptor" evidence="2">
    <location>
        <position position="138"/>
    </location>
</feature>
<feature type="binding site" evidence="2">
    <location>
        <begin position="11"/>
        <end position="17"/>
    </location>
    <ligand>
        <name>NADP(+)</name>
        <dbReference type="ChEBI" id="CHEBI:58349"/>
    </ligand>
</feature>
<feature type="binding site" evidence="2">
    <location>
        <position position="36"/>
    </location>
    <ligand>
        <name>NADP(+)</name>
        <dbReference type="ChEBI" id="CHEBI:58349"/>
    </ligand>
</feature>
<feature type="binding site" evidence="2">
    <location>
        <position position="45"/>
    </location>
    <ligand>
        <name>NADP(+)</name>
        <dbReference type="ChEBI" id="CHEBI:58349"/>
    </ligand>
</feature>
<feature type="binding site" evidence="2">
    <location>
        <position position="142"/>
    </location>
    <ligand>
        <name>NADP(+)</name>
        <dbReference type="ChEBI" id="CHEBI:58349"/>
    </ligand>
</feature>
<feature type="binding site" evidence="2">
    <location>
        <position position="270"/>
    </location>
    <ligand>
        <name>substrate</name>
    </ligand>
</feature>
<keyword id="KW-0521">NADP</keyword>
<keyword id="KW-0560">Oxidoreductase</keyword>
<accession>Q9LD13</accession>
<protein>
    <recommendedName>
        <fullName>Bifunctional pinoresinol-lariciresinol reductase 2</fullName>
        <shortName>PLR-Tp2</shortName>
    </recommendedName>
    <alternativeName>
        <fullName>(+)-lariciresinol reductase</fullName>
        <ecNumber>1.23.1.2</ecNumber>
    </alternativeName>
    <alternativeName>
        <fullName>(+)-pinoresinol reductase</fullName>
        <ecNumber>1.23.1.1</ecNumber>
    </alternativeName>
    <alternativeName>
        <fullName>(-)-pinoresinol reductase</fullName>
        <ecNumber>1.23.1.3</ecNumber>
    </alternativeName>
</protein>